<sequence>MTTLTKNSKIIYAGTGRRKTSIARVKLVPGSGKLIINGLPGESYLQFSPNYLRVSYSPLKILGLNKEYDIYVKTEGGGLTGQANAIRLGLARALCRMNPDNRTTLKAEGFLTRDARIKERKKYGLRKARKAPQYSKR</sequence>
<organism>
    <name type="scientific">Gracilaria tenuistipitata var. liui</name>
    <name type="common">Red alga</name>
    <dbReference type="NCBI Taxonomy" id="285951"/>
    <lineage>
        <taxon>Eukaryota</taxon>
        <taxon>Rhodophyta</taxon>
        <taxon>Florideophyceae</taxon>
        <taxon>Rhodymeniophycidae</taxon>
        <taxon>Gracilariales</taxon>
        <taxon>Gracilariaceae</taxon>
        <taxon>Gracilaria</taxon>
        <taxon>Gracilaria tenuistipitata</taxon>
    </lineage>
</organism>
<dbReference type="EMBL" id="AY673996">
    <property type="protein sequence ID" value="AAT79659.1"/>
    <property type="molecule type" value="Genomic_DNA"/>
</dbReference>
<dbReference type="RefSeq" id="YP_063584.1">
    <property type="nucleotide sequence ID" value="NC_006137.1"/>
</dbReference>
<dbReference type="SMR" id="Q6B8X6"/>
<dbReference type="GeneID" id="2944105"/>
<dbReference type="GO" id="GO:0009507">
    <property type="term" value="C:chloroplast"/>
    <property type="evidence" value="ECO:0007669"/>
    <property type="project" value="UniProtKB-SubCell"/>
</dbReference>
<dbReference type="GO" id="GO:0015935">
    <property type="term" value="C:small ribosomal subunit"/>
    <property type="evidence" value="ECO:0007669"/>
    <property type="project" value="TreeGrafter"/>
</dbReference>
<dbReference type="GO" id="GO:0003723">
    <property type="term" value="F:RNA binding"/>
    <property type="evidence" value="ECO:0007669"/>
    <property type="project" value="TreeGrafter"/>
</dbReference>
<dbReference type="GO" id="GO:0003735">
    <property type="term" value="F:structural constituent of ribosome"/>
    <property type="evidence" value="ECO:0007669"/>
    <property type="project" value="InterPro"/>
</dbReference>
<dbReference type="GO" id="GO:0006412">
    <property type="term" value="P:translation"/>
    <property type="evidence" value="ECO:0007669"/>
    <property type="project" value="UniProtKB-UniRule"/>
</dbReference>
<dbReference type="FunFam" id="3.30.230.10:FF:000001">
    <property type="entry name" value="30S ribosomal protein S9"/>
    <property type="match status" value="1"/>
</dbReference>
<dbReference type="Gene3D" id="3.30.230.10">
    <property type="match status" value="1"/>
</dbReference>
<dbReference type="HAMAP" id="MF_00532_B">
    <property type="entry name" value="Ribosomal_uS9_B"/>
    <property type="match status" value="1"/>
</dbReference>
<dbReference type="InterPro" id="IPR020568">
    <property type="entry name" value="Ribosomal_Su5_D2-typ_SF"/>
</dbReference>
<dbReference type="InterPro" id="IPR000754">
    <property type="entry name" value="Ribosomal_uS9"/>
</dbReference>
<dbReference type="InterPro" id="IPR023035">
    <property type="entry name" value="Ribosomal_uS9_bac/plastid"/>
</dbReference>
<dbReference type="InterPro" id="IPR020574">
    <property type="entry name" value="Ribosomal_uS9_CS"/>
</dbReference>
<dbReference type="InterPro" id="IPR014721">
    <property type="entry name" value="Ribsml_uS5_D2-typ_fold_subgr"/>
</dbReference>
<dbReference type="NCBIfam" id="NF001099">
    <property type="entry name" value="PRK00132.1"/>
    <property type="match status" value="1"/>
</dbReference>
<dbReference type="PANTHER" id="PTHR21569">
    <property type="entry name" value="RIBOSOMAL PROTEIN S9"/>
    <property type="match status" value="1"/>
</dbReference>
<dbReference type="PANTHER" id="PTHR21569:SF1">
    <property type="entry name" value="SMALL RIBOSOMAL SUBUNIT PROTEIN US9M"/>
    <property type="match status" value="1"/>
</dbReference>
<dbReference type="Pfam" id="PF00380">
    <property type="entry name" value="Ribosomal_S9"/>
    <property type="match status" value="1"/>
</dbReference>
<dbReference type="SUPFAM" id="SSF54211">
    <property type="entry name" value="Ribosomal protein S5 domain 2-like"/>
    <property type="match status" value="1"/>
</dbReference>
<dbReference type="PROSITE" id="PS00360">
    <property type="entry name" value="RIBOSOMAL_S9"/>
    <property type="match status" value="1"/>
</dbReference>
<accession>Q6B8X6</accession>
<comment type="subcellular location">
    <subcellularLocation>
        <location>Plastid</location>
        <location>Chloroplast</location>
    </subcellularLocation>
</comment>
<comment type="similarity">
    <text evidence="1">Belongs to the universal ribosomal protein uS9 family.</text>
</comment>
<proteinExistence type="inferred from homology"/>
<name>RR9_GRATL</name>
<feature type="chain" id="PRO_0000111454" description="Small ribosomal subunit protein uS9c">
    <location>
        <begin position="1"/>
        <end position="137"/>
    </location>
</feature>
<gene>
    <name type="primary">rps9</name>
    <name type="ordered locus">Grc000078</name>
</gene>
<geneLocation type="chloroplast"/>
<reference key="1">
    <citation type="journal article" date="2004" name="J. Mol. Evol.">
        <title>Comparative analysis of the complete plastid genome sequence of the red alga Gracilaria tenuistipitata var. liui provides insights into the evolution of rhodoplasts and their relationship to other plastids.</title>
        <authorList>
            <person name="Hagopian J.C."/>
            <person name="Reis M."/>
            <person name="Kitajima J.P."/>
            <person name="Bhattacharya D."/>
            <person name="de Oliveira M.C."/>
        </authorList>
    </citation>
    <scope>NUCLEOTIDE SEQUENCE [LARGE SCALE GENOMIC DNA]</scope>
</reference>
<keyword id="KW-0150">Chloroplast</keyword>
<keyword id="KW-0934">Plastid</keyword>
<keyword id="KW-0687">Ribonucleoprotein</keyword>
<keyword id="KW-0689">Ribosomal protein</keyword>
<evidence type="ECO:0000305" key="1"/>
<protein>
    <recommendedName>
        <fullName evidence="1">Small ribosomal subunit protein uS9c</fullName>
    </recommendedName>
    <alternativeName>
        <fullName>30S ribosomal protein S9, chloroplastic</fullName>
    </alternativeName>
</protein>